<accession>Q05628</accession>
<proteinExistence type="inferred from homology"/>
<name>CBID_SALTY</name>
<feature type="chain" id="PRO_0000141684" description="Cobalt-precorrin-5B C(1)-methyltransferase">
    <location>
        <begin position="1"/>
        <end position="379"/>
    </location>
</feature>
<sequence length="379" mass="40800">MSELSFDAPVWHHGKALRKGYTTGSCATAAAKVAALMVLRQHLIHQVSIVTPSGVTLCLNVESPHIEGQQAIAAIRKDGGDDVDATHGMLIFARVTLNDSGEITLTGGEGIGTVTRKGIGLPLGSAAINRTPRHTIESAVREAIGPARGADVEIFAPEGEARAQKTYNSRLGILGGISIIGTTGIVTPMSEESWKRSLSLELEIKRASGLTRVILVPGNHGERFVREQMGVDTQAVVTMSNFVGYMIEEAVRLGFCQIVLVGHPGKLIKIAAGIFHTHSHIADARMETLVAHLALLGAPLELLTLVSDCDTTEAAMEHIEAYGFGHIYNHLARRICLRVMQMLRFTKTPPVCDAILFSFDNHILGSNRPVDEIAKELQC</sequence>
<comment type="function">
    <text evidence="1 2">Catalyzes the methylation of C-1 in cobalt-precorrin-5B to form cobalt-precorrin-6A.</text>
</comment>
<comment type="catalytic activity">
    <reaction evidence="1">
        <text>Co-precorrin-5B + S-adenosyl-L-methionine = Co-precorrin-6A + S-adenosyl-L-homocysteine</text>
        <dbReference type="Rhea" id="RHEA:26285"/>
        <dbReference type="ChEBI" id="CHEBI:57856"/>
        <dbReference type="ChEBI" id="CHEBI:59789"/>
        <dbReference type="ChEBI" id="CHEBI:60063"/>
        <dbReference type="ChEBI" id="CHEBI:60064"/>
        <dbReference type="EC" id="2.1.1.195"/>
    </reaction>
</comment>
<comment type="pathway">
    <text evidence="1">Cofactor biosynthesis; adenosylcobalamin biosynthesis; cob(II)yrinate a,c-diamide from sirohydrochlorin (anaerobic route): step 6/10.</text>
</comment>
<comment type="similarity">
    <text evidence="1">Belongs to the CbiD family.</text>
</comment>
<protein>
    <recommendedName>
        <fullName evidence="1">Cobalt-precorrin-5B C(1)-methyltransferase</fullName>
        <ecNumber evidence="1">2.1.1.195</ecNumber>
    </recommendedName>
    <alternativeName>
        <fullName evidence="1">Cobalt-precorrin-6A synthase</fullName>
    </alternativeName>
</protein>
<organism>
    <name type="scientific">Salmonella typhimurium (strain LT2 / SGSC1412 / ATCC 700720)</name>
    <dbReference type="NCBI Taxonomy" id="99287"/>
    <lineage>
        <taxon>Bacteria</taxon>
        <taxon>Pseudomonadati</taxon>
        <taxon>Pseudomonadota</taxon>
        <taxon>Gammaproteobacteria</taxon>
        <taxon>Enterobacterales</taxon>
        <taxon>Enterobacteriaceae</taxon>
        <taxon>Salmonella</taxon>
    </lineage>
</organism>
<keyword id="KW-0169">Cobalamin biosynthesis</keyword>
<keyword id="KW-0489">Methyltransferase</keyword>
<keyword id="KW-1185">Reference proteome</keyword>
<keyword id="KW-0949">S-adenosyl-L-methionine</keyword>
<keyword id="KW-0808">Transferase</keyword>
<gene>
    <name evidence="1" type="primary">cbiD</name>
    <name type="ordered locus">STM2032</name>
</gene>
<evidence type="ECO:0000255" key="1">
    <source>
        <dbReference type="HAMAP-Rule" id="MF_00787"/>
    </source>
</evidence>
<evidence type="ECO:0000269" key="2">
    <source>
    </source>
</evidence>
<reference key="1">
    <citation type="journal article" date="1993" name="J. Bacteriol.">
        <title>Characterization of the cobalamin (vitamin B12) biosynthetic genes of Salmonella typhimurium.</title>
        <authorList>
            <person name="Roth J.R."/>
            <person name="Lawrence J.G."/>
            <person name="Rubenfield M."/>
            <person name="Kieffer-Higgins S."/>
            <person name="Church G.M."/>
        </authorList>
    </citation>
    <scope>NUCLEOTIDE SEQUENCE [GENOMIC DNA]</scope>
    <source>
        <strain>LT2</strain>
    </source>
</reference>
<reference key="2">
    <citation type="journal article" date="2001" name="Nature">
        <title>Complete genome sequence of Salmonella enterica serovar Typhimurium LT2.</title>
        <authorList>
            <person name="McClelland M."/>
            <person name="Sanderson K.E."/>
            <person name="Spieth J."/>
            <person name="Clifton S.W."/>
            <person name="Latreille P."/>
            <person name="Courtney L."/>
            <person name="Porwollik S."/>
            <person name="Ali J."/>
            <person name="Dante M."/>
            <person name="Du F."/>
            <person name="Hou S."/>
            <person name="Layman D."/>
            <person name="Leonard S."/>
            <person name="Nguyen C."/>
            <person name="Scott K."/>
            <person name="Holmes A."/>
            <person name="Grewal N."/>
            <person name="Mulvaney E."/>
            <person name="Ryan E."/>
            <person name="Sun H."/>
            <person name="Florea L."/>
            <person name="Miller W."/>
            <person name="Stoneking T."/>
            <person name="Nhan M."/>
            <person name="Waterston R."/>
            <person name="Wilson R.K."/>
        </authorList>
    </citation>
    <scope>NUCLEOTIDE SEQUENCE [LARGE SCALE GENOMIC DNA]</scope>
    <source>
        <strain>LT2 / SGSC1412 / ATCC 700720</strain>
    </source>
</reference>
<reference key="3">
    <citation type="journal article" date="2005" name="J. Biol. Chem.">
        <title>Genetically engineered production of 1-desmethylcobyrinic acid, 1-desmethylcobyrinic acid a,c-diamide, and cobyrinic acid a,c-diamide in Escherichia coli implies a role for CbiD in C-1 methylation in the anaerobic pathway to cobalamin.</title>
        <authorList>
            <person name="Roessner C.A."/>
            <person name="Williams H.J."/>
            <person name="Scott A.I."/>
        </authorList>
    </citation>
    <scope>FUNCTION</scope>
</reference>
<dbReference type="EC" id="2.1.1.195" evidence="1"/>
<dbReference type="EMBL" id="L12006">
    <property type="protein sequence ID" value="AAA27255.1"/>
    <property type="molecule type" value="Genomic_DNA"/>
</dbReference>
<dbReference type="EMBL" id="AE006468">
    <property type="protein sequence ID" value="AAL20936.1"/>
    <property type="molecule type" value="Genomic_DNA"/>
</dbReference>
<dbReference type="RefSeq" id="NP_460977.1">
    <property type="nucleotide sequence ID" value="NC_003197.2"/>
</dbReference>
<dbReference type="RefSeq" id="WP_001292908.1">
    <property type="nucleotide sequence ID" value="NC_003197.2"/>
</dbReference>
<dbReference type="SMR" id="Q05628"/>
<dbReference type="STRING" id="99287.STM2032"/>
<dbReference type="PaxDb" id="99287-STM2032"/>
<dbReference type="GeneID" id="1253553"/>
<dbReference type="KEGG" id="stm:STM2032"/>
<dbReference type="PATRIC" id="fig|99287.12.peg.2154"/>
<dbReference type="HOGENOM" id="CLU_041273_1_0_6"/>
<dbReference type="OMA" id="FHTHHHL"/>
<dbReference type="PhylomeDB" id="Q05628"/>
<dbReference type="BioCyc" id="MetaCyc:MONOMER-13221"/>
<dbReference type="BioCyc" id="SENT99287:STM2032-MONOMER"/>
<dbReference type="BRENDA" id="2.1.1.195">
    <property type="organism ID" value="2169"/>
</dbReference>
<dbReference type="UniPathway" id="UPA00148">
    <property type="reaction ID" value="UER00227"/>
</dbReference>
<dbReference type="Proteomes" id="UP000001014">
    <property type="component" value="Chromosome"/>
</dbReference>
<dbReference type="GO" id="GO:0043780">
    <property type="term" value="F:cobalt-precorrin-5B C1-methyltransferase activity"/>
    <property type="evidence" value="ECO:0007669"/>
    <property type="project" value="RHEA"/>
</dbReference>
<dbReference type="GO" id="GO:0019251">
    <property type="term" value="P:anaerobic cobalamin biosynthetic process"/>
    <property type="evidence" value="ECO:0007669"/>
    <property type="project" value="UniProtKB-UniRule"/>
</dbReference>
<dbReference type="GO" id="GO:0032259">
    <property type="term" value="P:methylation"/>
    <property type="evidence" value="ECO:0007669"/>
    <property type="project" value="UniProtKB-KW"/>
</dbReference>
<dbReference type="Gene3D" id="3.30.2110.10">
    <property type="entry name" value="CbiD-like"/>
    <property type="match status" value="1"/>
</dbReference>
<dbReference type="HAMAP" id="MF_00787">
    <property type="entry name" value="CbiD"/>
    <property type="match status" value="1"/>
</dbReference>
<dbReference type="InterPro" id="IPR002748">
    <property type="entry name" value="CbiD"/>
</dbReference>
<dbReference type="InterPro" id="IPR036074">
    <property type="entry name" value="CbiD_sf"/>
</dbReference>
<dbReference type="NCBIfam" id="TIGR00312">
    <property type="entry name" value="cbiD"/>
    <property type="match status" value="1"/>
</dbReference>
<dbReference type="PANTHER" id="PTHR35863">
    <property type="entry name" value="COBALT-PRECORRIN-5B C(1)-METHYLTRANSFERASE"/>
    <property type="match status" value="1"/>
</dbReference>
<dbReference type="PANTHER" id="PTHR35863:SF1">
    <property type="entry name" value="COBALT-PRECORRIN-5B C(1)-METHYLTRANSFERASE"/>
    <property type="match status" value="1"/>
</dbReference>
<dbReference type="Pfam" id="PF01888">
    <property type="entry name" value="CbiD"/>
    <property type="match status" value="1"/>
</dbReference>
<dbReference type="PIRSF" id="PIRSF026782">
    <property type="entry name" value="CbiD"/>
    <property type="match status" value="1"/>
</dbReference>
<dbReference type="SUPFAM" id="SSF111342">
    <property type="entry name" value="CbiD-like"/>
    <property type="match status" value="1"/>
</dbReference>